<protein>
    <recommendedName>
        <fullName evidence="1">Phosphoribosyl-AMP cyclohydrolase</fullName>
        <shortName evidence="1">PRA-CH</shortName>
        <ecNumber evidence="1">3.5.4.19</ecNumber>
    </recommendedName>
</protein>
<feature type="chain" id="PRO_1000213300" description="Phosphoribosyl-AMP cyclohydrolase">
    <location>
        <begin position="1"/>
        <end position="125"/>
    </location>
</feature>
<feature type="binding site" evidence="1">
    <location>
        <position position="74"/>
    </location>
    <ligand>
        <name>Mg(2+)</name>
        <dbReference type="ChEBI" id="CHEBI:18420"/>
    </ligand>
</feature>
<feature type="binding site" evidence="1">
    <location>
        <position position="75"/>
    </location>
    <ligand>
        <name>Zn(2+)</name>
        <dbReference type="ChEBI" id="CHEBI:29105"/>
        <note>ligand shared between dimeric partners</note>
    </ligand>
</feature>
<feature type="binding site" evidence="1">
    <location>
        <position position="76"/>
    </location>
    <ligand>
        <name>Mg(2+)</name>
        <dbReference type="ChEBI" id="CHEBI:18420"/>
    </ligand>
</feature>
<feature type="binding site" evidence="1">
    <location>
        <position position="78"/>
    </location>
    <ligand>
        <name>Mg(2+)</name>
        <dbReference type="ChEBI" id="CHEBI:18420"/>
    </ligand>
</feature>
<feature type="binding site" evidence="1">
    <location>
        <position position="92"/>
    </location>
    <ligand>
        <name>Zn(2+)</name>
        <dbReference type="ChEBI" id="CHEBI:29105"/>
        <note>ligand shared between dimeric partners</note>
    </ligand>
</feature>
<feature type="binding site" evidence="1">
    <location>
        <position position="99"/>
    </location>
    <ligand>
        <name>Zn(2+)</name>
        <dbReference type="ChEBI" id="CHEBI:29105"/>
        <note>ligand shared between dimeric partners</note>
    </ligand>
</feature>
<proteinExistence type="inferred from homology"/>
<organism>
    <name type="scientific">Desulforapulum autotrophicum (strain ATCC 43914 / DSM 3382 / VKM B-1955 / HRM2)</name>
    <name type="common">Desulfobacterium autotrophicum</name>
    <dbReference type="NCBI Taxonomy" id="177437"/>
    <lineage>
        <taxon>Bacteria</taxon>
        <taxon>Pseudomonadati</taxon>
        <taxon>Thermodesulfobacteriota</taxon>
        <taxon>Desulfobacteria</taxon>
        <taxon>Desulfobacterales</taxon>
        <taxon>Desulfobacteraceae</taxon>
        <taxon>Desulforapulum</taxon>
    </lineage>
</organism>
<reference key="1">
    <citation type="journal article" date="2009" name="Environ. Microbiol.">
        <title>Genome sequence of Desulfobacterium autotrophicum HRM2, a marine sulfate reducer oxidizing organic carbon completely to carbon dioxide.</title>
        <authorList>
            <person name="Strittmatter A.W."/>
            <person name="Liesegang H."/>
            <person name="Rabus R."/>
            <person name="Decker I."/>
            <person name="Amann J."/>
            <person name="Andres S."/>
            <person name="Henne A."/>
            <person name="Fricke W.F."/>
            <person name="Martinez-Arias R."/>
            <person name="Bartels D."/>
            <person name="Goesmann A."/>
            <person name="Krause L."/>
            <person name="Puehler A."/>
            <person name="Klenk H.P."/>
            <person name="Richter M."/>
            <person name="Schuler M."/>
            <person name="Gloeckner F.O."/>
            <person name="Meyerdierks A."/>
            <person name="Gottschalk G."/>
            <person name="Amann R."/>
        </authorList>
    </citation>
    <scope>NUCLEOTIDE SEQUENCE [LARGE SCALE GENOMIC DNA]</scope>
    <source>
        <strain>ATCC 43914 / DSM 3382 / VKM B-1955 / HRM2</strain>
    </source>
</reference>
<keyword id="KW-0028">Amino-acid biosynthesis</keyword>
<keyword id="KW-0963">Cytoplasm</keyword>
<keyword id="KW-0368">Histidine biosynthesis</keyword>
<keyword id="KW-0378">Hydrolase</keyword>
<keyword id="KW-0460">Magnesium</keyword>
<keyword id="KW-0479">Metal-binding</keyword>
<keyword id="KW-1185">Reference proteome</keyword>
<keyword id="KW-0862">Zinc</keyword>
<dbReference type="EC" id="3.5.4.19" evidence="1"/>
<dbReference type="EMBL" id="CP001087">
    <property type="protein sequence ID" value="ACN14194.1"/>
    <property type="molecule type" value="Genomic_DNA"/>
</dbReference>
<dbReference type="RefSeq" id="WP_015902983.1">
    <property type="nucleotide sequence ID" value="NC_012108.1"/>
</dbReference>
<dbReference type="SMR" id="C0QLA8"/>
<dbReference type="STRING" id="177437.HRM2_10820"/>
<dbReference type="KEGG" id="dat:HRM2_10820"/>
<dbReference type="eggNOG" id="COG0139">
    <property type="taxonomic scope" value="Bacteria"/>
</dbReference>
<dbReference type="HOGENOM" id="CLU_048577_5_3_7"/>
<dbReference type="OrthoDB" id="9795769at2"/>
<dbReference type="UniPathway" id="UPA00031">
    <property type="reaction ID" value="UER00008"/>
</dbReference>
<dbReference type="Proteomes" id="UP000000442">
    <property type="component" value="Chromosome"/>
</dbReference>
<dbReference type="GO" id="GO:0005737">
    <property type="term" value="C:cytoplasm"/>
    <property type="evidence" value="ECO:0007669"/>
    <property type="project" value="UniProtKB-SubCell"/>
</dbReference>
<dbReference type="GO" id="GO:0000287">
    <property type="term" value="F:magnesium ion binding"/>
    <property type="evidence" value="ECO:0007669"/>
    <property type="project" value="UniProtKB-UniRule"/>
</dbReference>
<dbReference type="GO" id="GO:0004635">
    <property type="term" value="F:phosphoribosyl-AMP cyclohydrolase activity"/>
    <property type="evidence" value="ECO:0007669"/>
    <property type="project" value="UniProtKB-UniRule"/>
</dbReference>
<dbReference type="GO" id="GO:0008270">
    <property type="term" value="F:zinc ion binding"/>
    <property type="evidence" value="ECO:0007669"/>
    <property type="project" value="UniProtKB-UniRule"/>
</dbReference>
<dbReference type="GO" id="GO:0000105">
    <property type="term" value="P:L-histidine biosynthetic process"/>
    <property type="evidence" value="ECO:0007669"/>
    <property type="project" value="UniProtKB-UniRule"/>
</dbReference>
<dbReference type="FunFam" id="3.10.20.810:FF:000001">
    <property type="entry name" value="Histidine biosynthesis bifunctional protein HisIE"/>
    <property type="match status" value="1"/>
</dbReference>
<dbReference type="Gene3D" id="3.10.20.810">
    <property type="entry name" value="Phosphoribosyl-AMP cyclohydrolase"/>
    <property type="match status" value="1"/>
</dbReference>
<dbReference type="HAMAP" id="MF_01021">
    <property type="entry name" value="HisI"/>
    <property type="match status" value="1"/>
</dbReference>
<dbReference type="InterPro" id="IPR026660">
    <property type="entry name" value="PRA-CH"/>
</dbReference>
<dbReference type="InterPro" id="IPR002496">
    <property type="entry name" value="PRib_AMP_CycHydrolase_dom"/>
</dbReference>
<dbReference type="InterPro" id="IPR038019">
    <property type="entry name" value="PRib_AMP_CycHydrolase_sf"/>
</dbReference>
<dbReference type="NCBIfam" id="NF000768">
    <property type="entry name" value="PRK00051.1"/>
    <property type="match status" value="1"/>
</dbReference>
<dbReference type="PANTHER" id="PTHR42945">
    <property type="entry name" value="HISTIDINE BIOSYNTHESIS BIFUNCTIONAL PROTEIN"/>
    <property type="match status" value="1"/>
</dbReference>
<dbReference type="PANTHER" id="PTHR42945:SF1">
    <property type="entry name" value="HISTIDINE BIOSYNTHESIS BIFUNCTIONAL PROTEIN HIS7"/>
    <property type="match status" value="1"/>
</dbReference>
<dbReference type="Pfam" id="PF01502">
    <property type="entry name" value="PRA-CH"/>
    <property type="match status" value="1"/>
</dbReference>
<dbReference type="SUPFAM" id="SSF141734">
    <property type="entry name" value="HisI-like"/>
    <property type="match status" value="1"/>
</dbReference>
<name>HIS3_DESAH</name>
<gene>
    <name evidence="1" type="primary">hisI</name>
    <name type="ordered locus">HRM2_10820</name>
</gene>
<accession>C0QLA8</accession>
<comment type="function">
    <text evidence="1">Catalyzes the hydrolysis of the adenine ring of phosphoribosyl-AMP.</text>
</comment>
<comment type="catalytic activity">
    <reaction evidence="1">
        <text>1-(5-phospho-beta-D-ribosyl)-5'-AMP + H2O = 1-(5-phospho-beta-D-ribosyl)-5-[(5-phospho-beta-D-ribosylamino)methylideneamino]imidazole-4-carboxamide</text>
        <dbReference type="Rhea" id="RHEA:20049"/>
        <dbReference type="ChEBI" id="CHEBI:15377"/>
        <dbReference type="ChEBI" id="CHEBI:58435"/>
        <dbReference type="ChEBI" id="CHEBI:59457"/>
        <dbReference type="EC" id="3.5.4.19"/>
    </reaction>
</comment>
<comment type="cofactor">
    <cofactor evidence="1">
        <name>Mg(2+)</name>
        <dbReference type="ChEBI" id="CHEBI:18420"/>
    </cofactor>
    <text evidence="1">Binds 1 Mg(2+) ion per subunit.</text>
</comment>
<comment type="cofactor">
    <cofactor evidence="1">
        <name>Zn(2+)</name>
        <dbReference type="ChEBI" id="CHEBI:29105"/>
    </cofactor>
    <text evidence="1">Binds 1 zinc ion per subunit.</text>
</comment>
<comment type="pathway">
    <text evidence="1">Amino-acid biosynthesis; L-histidine biosynthesis; L-histidine from 5-phospho-alpha-D-ribose 1-diphosphate: step 3/9.</text>
</comment>
<comment type="subunit">
    <text evidence="1">Homodimer.</text>
</comment>
<comment type="subcellular location">
    <subcellularLocation>
        <location evidence="1">Cytoplasm</location>
    </subcellularLocation>
</comment>
<comment type="similarity">
    <text evidence="1">Belongs to the PRA-CH family.</text>
</comment>
<sequence length="125" mass="14130">MVELDFNKTGGLIPAIAQDHETGEVLMLAYMNEAAWNKTLESGMATYFSRSRQSLWKKGETSGHVQVVKEIRIDCDNDTVLLKVEQKGGAACHLGYKSCFFRRVVKGDDPVIMEQQIFDPKKVYK</sequence>
<evidence type="ECO:0000255" key="1">
    <source>
        <dbReference type="HAMAP-Rule" id="MF_01021"/>
    </source>
</evidence>